<name>HISZ_STAAR</name>
<protein>
    <recommendedName>
        <fullName evidence="1">ATP phosphoribosyltransferase regulatory subunit</fullName>
    </recommendedName>
</protein>
<feature type="chain" id="PRO_0000171062" description="ATP phosphoribosyltransferase regulatory subunit">
    <location>
        <begin position="1"/>
        <end position="272"/>
    </location>
</feature>
<gene>
    <name evidence="1" type="primary">hisZ</name>
    <name type="ordered locus">SAR2762</name>
</gene>
<evidence type="ECO:0000255" key="1">
    <source>
        <dbReference type="HAMAP-Rule" id="MF_00125"/>
    </source>
</evidence>
<comment type="function">
    <text evidence="1">Required for the first step of histidine biosynthesis. May allow the feedback regulation of ATP phosphoribosyltransferase activity by histidine.</text>
</comment>
<comment type="pathway">
    <text evidence="1">Amino-acid biosynthesis; L-histidine biosynthesis; L-histidine from 5-phospho-alpha-D-ribose 1-diphosphate: step 1/9.</text>
</comment>
<comment type="subunit">
    <text evidence="1">Heteromultimer composed of HisG and HisZ subunits.</text>
</comment>
<comment type="subcellular location">
    <subcellularLocation>
        <location evidence="1">Cytoplasm</location>
    </subcellularLocation>
</comment>
<comment type="miscellaneous">
    <text>This function is generally fulfilled by the C-terminal part of HisG, which is missing in some bacteria such as this one.</text>
</comment>
<comment type="similarity">
    <text evidence="1">Belongs to the class-II aminoacyl-tRNA synthetase family. HisZ subfamily.</text>
</comment>
<sequence length="272" mass="31668">MNNSEQLIALKESETAFLKYFNKADYELVDFSLVEKLDWKQLNHEDLQQMGERNFWQHEHQIYALRNDFTDQLLRYYSMYPTAATKVAYTGLIIRNNEAAVQVGLENYAPSLANVQQSLKLFIQFIQQQLRDNVHFVVLGHYQLLDALLDKSLQTPDILSMIEERNLSGLVTYLSTEHPIVQILKENTQQQLNVLEHYIPNDHPALVELKIWERWLHTQGYKDIHLDITAQPPRSYYTGLFIQCHFAENESRVLTGGYYKGSIEGFGLGLTL</sequence>
<reference key="1">
    <citation type="journal article" date="2004" name="Proc. Natl. Acad. Sci. U.S.A.">
        <title>Complete genomes of two clinical Staphylococcus aureus strains: evidence for the rapid evolution of virulence and drug resistance.</title>
        <authorList>
            <person name="Holden M.T.G."/>
            <person name="Feil E.J."/>
            <person name="Lindsay J.A."/>
            <person name="Peacock S.J."/>
            <person name="Day N.P.J."/>
            <person name="Enright M.C."/>
            <person name="Foster T.J."/>
            <person name="Moore C.E."/>
            <person name="Hurst L."/>
            <person name="Atkin R."/>
            <person name="Barron A."/>
            <person name="Bason N."/>
            <person name="Bentley S.D."/>
            <person name="Chillingworth C."/>
            <person name="Chillingworth T."/>
            <person name="Churcher C."/>
            <person name="Clark L."/>
            <person name="Corton C."/>
            <person name="Cronin A."/>
            <person name="Doggett J."/>
            <person name="Dowd L."/>
            <person name="Feltwell T."/>
            <person name="Hance Z."/>
            <person name="Harris B."/>
            <person name="Hauser H."/>
            <person name="Holroyd S."/>
            <person name="Jagels K."/>
            <person name="James K.D."/>
            <person name="Lennard N."/>
            <person name="Line A."/>
            <person name="Mayes R."/>
            <person name="Moule S."/>
            <person name="Mungall K."/>
            <person name="Ormond D."/>
            <person name="Quail M.A."/>
            <person name="Rabbinowitsch E."/>
            <person name="Rutherford K.M."/>
            <person name="Sanders M."/>
            <person name="Sharp S."/>
            <person name="Simmonds M."/>
            <person name="Stevens K."/>
            <person name="Whitehead S."/>
            <person name="Barrell B.G."/>
            <person name="Spratt B.G."/>
            <person name="Parkhill J."/>
        </authorList>
    </citation>
    <scope>NUCLEOTIDE SEQUENCE [LARGE SCALE GENOMIC DNA]</scope>
    <source>
        <strain>MRSA252</strain>
    </source>
</reference>
<dbReference type="EMBL" id="BX571856">
    <property type="protein sequence ID" value="CAG41737.1"/>
    <property type="molecule type" value="Genomic_DNA"/>
</dbReference>
<dbReference type="RefSeq" id="WP_001065582.1">
    <property type="nucleotide sequence ID" value="NC_002952.2"/>
</dbReference>
<dbReference type="SMR" id="Q6GDC4"/>
<dbReference type="KEGG" id="sar:SAR2762"/>
<dbReference type="HOGENOM" id="CLU_089652_0_0_9"/>
<dbReference type="UniPathway" id="UPA00031">
    <property type="reaction ID" value="UER00006"/>
</dbReference>
<dbReference type="Proteomes" id="UP000000596">
    <property type="component" value="Chromosome"/>
</dbReference>
<dbReference type="GO" id="GO:0005737">
    <property type="term" value="C:cytoplasm"/>
    <property type="evidence" value="ECO:0007669"/>
    <property type="project" value="UniProtKB-SubCell"/>
</dbReference>
<dbReference type="GO" id="GO:0140096">
    <property type="term" value="F:catalytic activity, acting on a protein"/>
    <property type="evidence" value="ECO:0007669"/>
    <property type="project" value="UniProtKB-ARBA"/>
</dbReference>
<dbReference type="GO" id="GO:0016740">
    <property type="term" value="F:transferase activity"/>
    <property type="evidence" value="ECO:0007669"/>
    <property type="project" value="UniProtKB-ARBA"/>
</dbReference>
<dbReference type="GO" id="GO:0000105">
    <property type="term" value="P:L-histidine biosynthetic process"/>
    <property type="evidence" value="ECO:0007669"/>
    <property type="project" value="UniProtKB-UniRule"/>
</dbReference>
<dbReference type="Gene3D" id="3.30.930.10">
    <property type="entry name" value="Bira Bifunctional Protein, Domain 2"/>
    <property type="match status" value="1"/>
</dbReference>
<dbReference type="HAMAP" id="MF_00125">
    <property type="entry name" value="HisZ"/>
    <property type="match status" value="1"/>
</dbReference>
<dbReference type="InterPro" id="IPR045864">
    <property type="entry name" value="aa-tRNA-synth_II/BPL/LPL"/>
</dbReference>
<dbReference type="InterPro" id="IPR041715">
    <property type="entry name" value="HisRS-like_core"/>
</dbReference>
<dbReference type="InterPro" id="IPR004517">
    <property type="entry name" value="HisZ"/>
</dbReference>
<dbReference type="NCBIfam" id="NF008947">
    <property type="entry name" value="PRK12294.1"/>
    <property type="match status" value="1"/>
</dbReference>
<dbReference type="Pfam" id="PF13393">
    <property type="entry name" value="tRNA-synt_His"/>
    <property type="match status" value="1"/>
</dbReference>
<dbReference type="SUPFAM" id="SSF55681">
    <property type="entry name" value="Class II aaRS and biotin synthetases"/>
    <property type="match status" value="1"/>
</dbReference>
<keyword id="KW-0028">Amino-acid biosynthesis</keyword>
<keyword id="KW-0963">Cytoplasm</keyword>
<keyword id="KW-0368">Histidine biosynthesis</keyword>
<proteinExistence type="inferred from homology"/>
<accession>Q6GDC4</accession>
<organism>
    <name type="scientific">Staphylococcus aureus (strain MRSA252)</name>
    <dbReference type="NCBI Taxonomy" id="282458"/>
    <lineage>
        <taxon>Bacteria</taxon>
        <taxon>Bacillati</taxon>
        <taxon>Bacillota</taxon>
        <taxon>Bacilli</taxon>
        <taxon>Bacillales</taxon>
        <taxon>Staphylococcaceae</taxon>
        <taxon>Staphylococcus</taxon>
    </lineage>
</organism>